<keyword id="KW-0002">3D-structure</keyword>
<keyword id="KW-0479">Metal-binding</keyword>
<keyword id="KW-0687">Ribonucleoprotein</keyword>
<keyword id="KW-0689">Ribosomal protein</keyword>
<keyword id="KW-0694">RNA-binding</keyword>
<keyword id="KW-0699">rRNA-binding</keyword>
<keyword id="KW-0862">Zinc</keyword>
<evidence type="ECO:0000255" key="1">
    <source>
        <dbReference type="HAMAP-Rule" id="MF_00501"/>
    </source>
</evidence>
<evidence type="ECO:0000305" key="2"/>
<evidence type="ECO:0007829" key="3">
    <source>
        <dbReference type="PDB" id="8CVM"/>
    </source>
</evidence>
<sequence length="69" mass="7718">MKQGIHPDYRETTVVCTCGNTFTTRSTSQSGTLNADVCSKCHPFYTGKQKILDAGGRVARFERRYGKKN</sequence>
<name>RL31_CUTAK</name>
<organism>
    <name type="scientific">Cutibacterium acnes (strain DSM 16379 / KPA171202)</name>
    <name type="common">Propionibacterium acnes</name>
    <dbReference type="NCBI Taxonomy" id="267747"/>
    <lineage>
        <taxon>Bacteria</taxon>
        <taxon>Bacillati</taxon>
        <taxon>Actinomycetota</taxon>
        <taxon>Actinomycetes</taxon>
        <taxon>Propionibacteriales</taxon>
        <taxon>Propionibacteriaceae</taxon>
        <taxon>Cutibacterium</taxon>
    </lineage>
</organism>
<reference key="1">
    <citation type="journal article" date="2004" name="Science">
        <title>The complete genome sequence of Propionibacterium acnes, a commensal of human skin.</title>
        <authorList>
            <person name="Brueggemann H."/>
            <person name="Henne A."/>
            <person name="Hoster F."/>
            <person name="Liesegang H."/>
            <person name="Wiezer A."/>
            <person name="Strittmatter A."/>
            <person name="Hujer S."/>
            <person name="Duerre P."/>
            <person name="Gottschalk G."/>
        </authorList>
    </citation>
    <scope>NUCLEOTIDE SEQUENCE [LARGE SCALE GENOMIC DNA]</scope>
    <source>
        <strain>DSM 16379 / KPA171202</strain>
    </source>
</reference>
<proteinExistence type="evidence at protein level"/>
<feature type="chain" id="PRO_0000173143" description="Large ribosomal subunit protein bL31">
    <location>
        <begin position="1"/>
        <end position="69"/>
    </location>
</feature>
<feature type="binding site" evidence="1">
    <location>
        <position position="16"/>
    </location>
    <ligand>
        <name>Zn(2+)</name>
        <dbReference type="ChEBI" id="CHEBI:29105"/>
    </ligand>
</feature>
<feature type="binding site" evidence="1">
    <location>
        <position position="18"/>
    </location>
    <ligand>
        <name>Zn(2+)</name>
        <dbReference type="ChEBI" id="CHEBI:29105"/>
    </ligand>
</feature>
<feature type="binding site" evidence="1">
    <location>
        <position position="38"/>
    </location>
    <ligand>
        <name>Zn(2+)</name>
        <dbReference type="ChEBI" id="CHEBI:29105"/>
    </ligand>
</feature>
<feature type="binding site" evidence="1">
    <location>
        <position position="41"/>
    </location>
    <ligand>
        <name>Zn(2+)</name>
        <dbReference type="ChEBI" id="CHEBI:29105"/>
    </ligand>
</feature>
<feature type="turn" evidence="3">
    <location>
        <begin position="3"/>
        <end position="5"/>
    </location>
</feature>
<feature type="strand" evidence="3">
    <location>
        <begin position="13"/>
        <end position="15"/>
    </location>
</feature>
<feature type="strand" evidence="3">
    <location>
        <begin position="17"/>
        <end position="19"/>
    </location>
</feature>
<feature type="strand" evidence="3">
    <location>
        <begin position="21"/>
        <end position="23"/>
    </location>
</feature>
<feature type="turn" evidence="3">
    <location>
        <begin position="43"/>
        <end position="45"/>
    </location>
</feature>
<feature type="helix" evidence="3">
    <location>
        <begin position="57"/>
        <end position="65"/>
    </location>
</feature>
<comment type="function">
    <text evidence="1">Binds the 23S rRNA.</text>
</comment>
<comment type="cofactor">
    <cofactor evidence="1">
        <name>Zn(2+)</name>
        <dbReference type="ChEBI" id="CHEBI:29105"/>
    </cofactor>
    <text evidence="1">Binds 1 zinc ion per subunit.</text>
</comment>
<comment type="subunit">
    <text evidence="1">Part of the 50S ribosomal subunit.</text>
</comment>
<comment type="similarity">
    <text evidence="1">Belongs to the bacterial ribosomal protein bL31 family. Type A subfamily.</text>
</comment>
<accession>Q6A8B4</accession>
<dbReference type="EMBL" id="AE017283">
    <property type="protein sequence ID" value="AAT83001.1"/>
    <property type="molecule type" value="Genomic_DNA"/>
</dbReference>
<dbReference type="RefSeq" id="WP_002513455.1">
    <property type="nucleotide sequence ID" value="NZ_CP025935.1"/>
</dbReference>
<dbReference type="PDB" id="8CRX">
    <property type="method" value="EM"/>
    <property type="resolution" value="2.78 A"/>
    <property type="chains" value="4=1-69"/>
</dbReference>
<dbReference type="PDB" id="8CVM">
    <property type="method" value="EM"/>
    <property type="resolution" value="2.66 A"/>
    <property type="chains" value="4=1-69"/>
</dbReference>
<dbReference type="PDBsum" id="8CRX"/>
<dbReference type="PDBsum" id="8CVM"/>
<dbReference type="SMR" id="Q6A8B4"/>
<dbReference type="EnsemblBacteria" id="AAT83001">
    <property type="protein sequence ID" value="AAT83001"/>
    <property type="gene ID" value="PPA1253"/>
</dbReference>
<dbReference type="GeneID" id="92857222"/>
<dbReference type="KEGG" id="pac:PPA1253"/>
<dbReference type="eggNOG" id="COG0254">
    <property type="taxonomic scope" value="Bacteria"/>
</dbReference>
<dbReference type="HOGENOM" id="CLU_114306_4_3_11"/>
<dbReference type="Proteomes" id="UP000000603">
    <property type="component" value="Chromosome"/>
</dbReference>
<dbReference type="GO" id="GO:1990904">
    <property type="term" value="C:ribonucleoprotein complex"/>
    <property type="evidence" value="ECO:0007669"/>
    <property type="project" value="UniProtKB-KW"/>
</dbReference>
<dbReference type="GO" id="GO:0005840">
    <property type="term" value="C:ribosome"/>
    <property type="evidence" value="ECO:0007669"/>
    <property type="project" value="UniProtKB-KW"/>
</dbReference>
<dbReference type="GO" id="GO:0046872">
    <property type="term" value="F:metal ion binding"/>
    <property type="evidence" value="ECO:0007669"/>
    <property type="project" value="UniProtKB-KW"/>
</dbReference>
<dbReference type="GO" id="GO:0019843">
    <property type="term" value="F:rRNA binding"/>
    <property type="evidence" value="ECO:0007669"/>
    <property type="project" value="UniProtKB-KW"/>
</dbReference>
<dbReference type="GO" id="GO:0003735">
    <property type="term" value="F:structural constituent of ribosome"/>
    <property type="evidence" value="ECO:0007669"/>
    <property type="project" value="InterPro"/>
</dbReference>
<dbReference type="GO" id="GO:0006412">
    <property type="term" value="P:translation"/>
    <property type="evidence" value="ECO:0007669"/>
    <property type="project" value="UniProtKB-UniRule"/>
</dbReference>
<dbReference type="Gene3D" id="4.10.830.30">
    <property type="entry name" value="Ribosomal protein L31"/>
    <property type="match status" value="1"/>
</dbReference>
<dbReference type="HAMAP" id="MF_00501">
    <property type="entry name" value="Ribosomal_bL31_1"/>
    <property type="match status" value="1"/>
</dbReference>
<dbReference type="InterPro" id="IPR034704">
    <property type="entry name" value="Ribosomal_bL28/bL31-like_sf"/>
</dbReference>
<dbReference type="InterPro" id="IPR002150">
    <property type="entry name" value="Ribosomal_bL31"/>
</dbReference>
<dbReference type="InterPro" id="IPR027491">
    <property type="entry name" value="Ribosomal_bL31_A"/>
</dbReference>
<dbReference type="InterPro" id="IPR042105">
    <property type="entry name" value="Ribosomal_bL31_sf"/>
</dbReference>
<dbReference type="NCBIfam" id="TIGR00105">
    <property type="entry name" value="L31"/>
    <property type="match status" value="1"/>
</dbReference>
<dbReference type="NCBIfam" id="NF000612">
    <property type="entry name" value="PRK00019.1"/>
    <property type="match status" value="1"/>
</dbReference>
<dbReference type="NCBIfam" id="NF001809">
    <property type="entry name" value="PRK00528.1"/>
    <property type="match status" value="1"/>
</dbReference>
<dbReference type="PANTHER" id="PTHR33280">
    <property type="entry name" value="50S RIBOSOMAL PROTEIN L31, CHLOROPLASTIC"/>
    <property type="match status" value="1"/>
</dbReference>
<dbReference type="PANTHER" id="PTHR33280:SF1">
    <property type="entry name" value="LARGE RIBOSOMAL SUBUNIT PROTEIN BL31C"/>
    <property type="match status" value="1"/>
</dbReference>
<dbReference type="Pfam" id="PF01197">
    <property type="entry name" value="Ribosomal_L31"/>
    <property type="match status" value="1"/>
</dbReference>
<dbReference type="PRINTS" id="PR01249">
    <property type="entry name" value="RIBOSOMALL31"/>
</dbReference>
<dbReference type="SUPFAM" id="SSF143800">
    <property type="entry name" value="L28p-like"/>
    <property type="match status" value="1"/>
</dbReference>
<dbReference type="PROSITE" id="PS01143">
    <property type="entry name" value="RIBOSOMAL_L31"/>
    <property type="match status" value="1"/>
</dbReference>
<gene>
    <name evidence="1" type="primary">rpmE</name>
    <name type="ordered locus">PPA1253</name>
</gene>
<protein>
    <recommendedName>
        <fullName evidence="1">Large ribosomal subunit protein bL31</fullName>
    </recommendedName>
    <alternativeName>
        <fullName evidence="2">50S ribosomal protein L31</fullName>
    </alternativeName>
</protein>